<gene>
    <name evidence="1" type="primary">truA</name>
    <name type="ordered locus">XOO3083</name>
</gene>
<organism>
    <name type="scientific">Xanthomonas oryzae pv. oryzae (strain MAFF 311018)</name>
    <dbReference type="NCBI Taxonomy" id="342109"/>
    <lineage>
        <taxon>Bacteria</taxon>
        <taxon>Pseudomonadati</taxon>
        <taxon>Pseudomonadota</taxon>
        <taxon>Gammaproteobacteria</taxon>
        <taxon>Lysobacterales</taxon>
        <taxon>Lysobacteraceae</taxon>
        <taxon>Xanthomonas</taxon>
    </lineage>
</organism>
<sequence length="257" mass="28305">MRYALGVEYDGSEFQGWQQLGEHGGPSVQASLQAALSSVADAPVQVVCAGRTDAGVHGECQVVHFDSDAHREPRGWMLGTTARLPPSIAVRWCVPAAADFHARFSARARRYRYRLLNRQIRPALYRQTLSWERRPLDADAMHVAAQALLGENDFSAFRSVQCQALHARRNLQAIHVQRIGEVVEVQVQANAFLHHMVRNIVGSLILVGTGEQPADWIATLLAGRDRTVAGPTAPPQGLVFIGPLYPAEWHLPAEVTQ</sequence>
<feature type="chain" id="PRO_1000017213" description="tRNA pseudouridine synthase A">
    <location>
        <begin position="1"/>
        <end position="257"/>
    </location>
</feature>
<feature type="active site" description="Nucleophile" evidence="1">
    <location>
        <position position="53"/>
    </location>
</feature>
<feature type="binding site" evidence="1">
    <location>
        <position position="111"/>
    </location>
    <ligand>
        <name>substrate</name>
    </ligand>
</feature>
<evidence type="ECO:0000255" key="1">
    <source>
        <dbReference type="HAMAP-Rule" id="MF_00171"/>
    </source>
</evidence>
<name>TRUA_XANOM</name>
<comment type="function">
    <text evidence="1">Formation of pseudouridine at positions 38, 39 and 40 in the anticodon stem and loop of transfer RNAs.</text>
</comment>
<comment type="catalytic activity">
    <reaction evidence="1">
        <text>uridine(38/39/40) in tRNA = pseudouridine(38/39/40) in tRNA</text>
        <dbReference type="Rhea" id="RHEA:22376"/>
        <dbReference type="Rhea" id="RHEA-COMP:10085"/>
        <dbReference type="Rhea" id="RHEA-COMP:10087"/>
        <dbReference type="ChEBI" id="CHEBI:65314"/>
        <dbReference type="ChEBI" id="CHEBI:65315"/>
        <dbReference type="EC" id="5.4.99.12"/>
    </reaction>
</comment>
<comment type="subunit">
    <text evidence="1">Homodimer.</text>
</comment>
<comment type="similarity">
    <text evidence="1">Belongs to the tRNA pseudouridine synthase TruA family.</text>
</comment>
<proteinExistence type="inferred from homology"/>
<accession>Q2P0T9</accession>
<protein>
    <recommendedName>
        <fullName evidence="1">tRNA pseudouridine synthase A</fullName>
        <ecNumber evidence="1">5.4.99.12</ecNumber>
    </recommendedName>
    <alternativeName>
        <fullName evidence="1">tRNA pseudouridine(38-40) synthase</fullName>
    </alternativeName>
    <alternativeName>
        <fullName evidence="1">tRNA pseudouridylate synthase I</fullName>
    </alternativeName>
    <alternativeName>
        <fullName evidence="1">tRNA-uridine isomerase I</fullName>
    </alternativeName>
</protein>
<dbReference type="EC" id="5.4.99.12" evidence="1"/>
<dbReference type="EMBL" id="AP008229">
    <property type="protein sequence ID" value="BAE69838.1"/>
    <property type="molecule type" value="Genomic_DNA"/>
</dbReference>
<dbReference type="RefSeq" id="WP_011259765.1">
    <property type="nucleotide sequence ID" value="NC_007705.1"/>
</dbReference>
<dbReference type="SMR" id="Q2P0T9"/>
<dbReference type="KEGG" id="xom:XOO3083"/>
<dbReference type="HOGENOM" id="CLU_014673_0_2_6"/>
<dbReference type="GO" id="GO:0003723">
    <property type="term" value="F:RNA binding"/>
    <property type="evidence" value="ECO:0007669"/>
    <property type="project" value="InterPro"/>
</dbReference>
<dbReference type="GO" id="GO:0160147">
    <property type="term" value="F:tRNA pseudouridine(38-40) synthase activity"/>
    <property type="evidence" value="ECO:0007669"/>
    <property type="project" value="UniProtKB-EC"/>
</dbReference>
<dbReference type="GO" id="GO:0031119">
    <property type="term" value="P:tRNA pseudouridine synthesis"/>
    <property type="evidence" value="ECO:0007669"/>
    <property type="project" value="UniProtKB-UniRule"/>
</dbReference>
<dbReference type="CDD" id="cd02570">
    <property type="entry name" value="PseudoU_synth_EcTruA"/>
    <property type="match status" value="1"/>
</dbReference>
<dbReference type="FunFam" id="3.30.70.580:FF:000001">
    <property type="entry name" value="tRNA pseudouridine synthase A"/>
    <property type="match status" value="1"/>
</dbReference>
<dbReference type="FunFam" id="3.30.70.660:FF:000008">
    <property type="entry name" value="tRNA pseudouridine synthase A"/>
    <property type="match status" value="1"/>
</dbReference>
<dbReference type="Gene3D" id="3.30.70.660">
    <property type="entry name" value="Pseudouridine synthase I, catalytic domain, C-terminal subdomain"/>
    <property type="match status" value="1"/>
</dbReference>
<dbReference type="Gene3D" id="3.30.70.580">
    <property type="entry name" value="Pseudouridine synthase I, catalytic domain, N-terminal subdomain"/>
    <property type="match status" value="1"/>
</dbReference>
<dbReference type="HAMAP" id="MF_00171">
    <property type="entry name" value="TruA"/>
    <property type="match status" value="1"/>
</dbReference>
<dbReference type="InterPro" id="IPR020103">
    <property type="entry name" value="PsdUridine_synth_cat_dom_sf"/>
</dbReference>
<dbReference type="InterPro" id="IPR001406">
    <property type="entry name" value="PsdUridine_synth_TruA"/>
</dbReference>
<dbReference type="InterPro" id="IPR020097">
    <property type="entry name" value="PsdUridine_synth_TruA_a/b_dom"/>
</dbReference>
<dbReference type="InterPro" id="IPR020095">
    <property type="entry name" value="PsdUridine_synth_TruA_C"/>
</dbReference>
<dbReference type="InterPro" id="IPR020094">
    <property type="entry name" value="TruA/RsuA/RluB/E/F_N"/>
</dbReference>
<dbReference type="NCBIfam" id="TIGR00071">
    <property type="entry name" value="hisT_truA"/>
    <property type="match status" value="1"/>
</dbReference>
<dbReference type="PANTHER" id="PTHR11142">
    <property type="entry name" value="PSEUDOURIDYLATE SYNTHASE"/>
    <property type="match status" value="1"/>
</dbReference>
<dbReference type="PANTHER" id="PTHR11142:SF0">
    <property type="entry name" value="TRNA PSEUDOURIDINE SYNTHASE-LIKE 1"/>
    <property type="match status" value="1"/>
</dbReference>
<dbReference type="Pfam" id="PF01416">
    <property type="entry name" value="PseudoU_synth_1"/>
    <property type="match status" value="2"/>
</dbReference>
<dbReference type="PIRSF" id="PIRSF001430">
    <property type="entry name" value="tRNA_psdUrid_synth"/>
    <property type="match status" value="1"/>
</dbReference>
<dbReference type="SUPFAM" id="SSF55120">
    <property type="entry name" value="Pseudouridine synthase"/>
    <property type="match status" value="1"/>
</dbReference>
<keyword id="KW-0413">Isomerase</keyword>
<keyword id="KW-0819">tRNA processing</keyword>
<reference key="1">
    <citation type="journal article" date="2005" name="Jpn. Agric. Res. Q.">
        <title>Genome sequence of Xanthomonas oryzae pv. oryzae suggests contribution of large numbers of effector genes and insertion sequences to its race diversity.</title>
        <authorList>
            <person name="Ochiai H."/>
            <person name="Inoue Y."/>
            <person name="Takeya M."/>
            <person name="Sasaki A."/>
            <person name="Kaku H."/>
        </authorList>
    </citation>
    <scope>NUCLEOTIDE SEQUENCE [LARGE SCALE GENOMIC DNA]</scope>
    <source>
        <strain>MAFF 311018</strain>
    </source>
</reference>